<proteinExistence type="inferred from homology"/>
<dbReference type="EC" id="6.1.1.10" evidence="1"/>
<dbReference type="EMBL" id="CP000803">
    <property type="protein sequence ID" value="ABU60945.2"/>
    <property type="molecule type" value="Genomic_DNA"/>
</dbReference>
<dbReference type="RefSeq" id="WP_003017907.1">
    <property type="nucleotide sequence ID" value="NC_009749.1"/>
</dbReference>
<dbReference type="SMR" id="A7NAE2"/>
<dbReference type="KEGG" id="fta:FTA_0468"/>
<dbReference type="HOGENOM" id="CLU_009710_7_0_6"/>
<dbReference type="GO" id="GO:0005829">
    <property type="term" value="C:cytosol"/>
    <property type="evidence" value="ECO:0007669"/>
    <property type="project" value="TreeGrafter"/>
</dbReference>
<dbReference type="GO" id="GO:0005524">
    <property type="term" value="F:ATP binding"/>
    <property type="evidence" value="ECO:0007669"/>
    <property type="project" value="UniProtKB-UniRule"/>
</dbReference>
<dbReference type="GO" id="GO:0046872">
    <property type="term" value="F:metal ion binding"/>
    <property type="evidence" value="ECO:0007669"/>
    <property type="project" value="UniProtKB-KW"/>
</dbReference>
<dbReference type="GO" id="GO:0004825">
    <property type="term" value="F:methionine-tRNA ligase activity"/>
    <property type="evidence" value="ECO:0007669"/>
    <property type="project" value="UniProtKB-UniRule"/>
</dbReference>
<dbReference type="GO" id="GO:0000049">
    <property type="term" value="F:tRNA binding"/>
    <property type="evidence" value="ECO:0007669"/>
    <property type="project" value="UniProtKB-KW"/>
</dbReference>
<dbReference type="GO" id="GO:0006431">
    <property type="term" value="P:methionyl-tRNA aminoacylation"/>
    <property type="evidence" value="ECO:0007669"/>
    <property type="project" value="UniProtKB-UniRule"/>
</dbReference>
<dbReference type="CDD" id="cd07957">
    <property type="entry name" value="Anticodon_Ia_Met"/>
    <property type="match status" value="1"/>
</dbReference>
<dbReference type="CDD" id="cd00814">
    <property type="entry name" value="MetRS_core"/>
    <property type="match status" value="1"/>
</dbReference>
<dbReference type="CDD" id="cd02800">
    <property type="entry name" value="tRNA_bind_EcMetRS_like"/>
    <property type="match status" value="1"/>
</dbReference>
<dbReference type="FunFam" id="1.10.730.10:FF:000005">
    <property type="entry name" value="Methionine--tRNA ligase"/>
    <property type="match status" value="1"/>
</dbReference>
<dbReference type="FunFam" id="2.20.28.20:FF:000001">
    <property type="entry name" value="Methionine--tRNA ligase"/>
    <property type="match status" value="1"/>
</dbReference>
<dbReference type="FunFam" id="2.40.50.140:FF:000042">
    <property type="entry name" value="Methionine--tRNA ligase"/>
    <property type="match status" value="1"/>
</dbReference>
<dbReference type="Gene3D" id="3.40.50.620">
    <property type="entry name" value="HUPs"/>
    <property type="match status" value="1"/>
</dbReference>
<dbReference type="Gene3D" id="1.10.730.10">
    <property type="entry name" value="Isoleucyl-tRNA Synthetase, Domain 1"/>
    <property type="match status" value="1"/>
</dbReference>
<dbReference type="Gene3D" id="2.20.28.20">
    <property type="entry name" value="Methionyl-tRNA synthetase, Zn-domain"/>
    <property type="match status" value="1"/>
</dbReference>
<dbReference type="Gene3D" id="2.40.50.140">
    <property type="entry name" value="Nucleic acid-binding proteins"/>
    <property type="match status" value="1"/>
</dbReference>
<dbReference type="HAMAP" id="MF_00098">
    <property type="entry name" value="Met_tRNA_synth_type1"/>
    <property type="match status" value="1"/>
</dbReference>
<dbReference type="InterPro" id="IPR001412">
    <property type="entry name" value="aa-tRNA-synth_I_CS"/>
</dbReference>
<dbReference type="InterPro" id="IPR041872">
    <property type="entry name" value="Anticodon_Met"/>
</dbReference>
<dbReference type="InterPro" id="IPR004495">
    <property type="entry name" value="Met-tRNA-synth_bsu_C"/>
</dbReference>
<dbReference type="InterPro" id="IPR023458">
    <property type="entry name" value="Met-tRNA_ligase_1"/>
</dbReference>
<dbReference type="InterPro" id="IPR014758">
    <property type="entry name" value="Met-tRNA_synth"/>
</dbReference>
<dbReference type="InterPro" id="IPR015413">
    <property type="entry name" value="Methionyl/Leucyl_tRNA_Synth"/>
</dbReference>
<dbReference type="InterPro" id="IPR033911">
    <property type="entry name" value="MetRS_core"/>
</dbReference>
<dbReference type="InterPro" id="IPR029038">
    <property type="entry name" value="MetRS_Zn"/>
</dbReference>
<dbReference type="InterPro" id="IPR012340">
    <property type="entry name" value="NA-bd_OB-fold"/>
</dbReference>
<dbReference type="InterPro" id="IPR014729">
    <property type="entry name" value="Rossmann-like_a/b/a_fold"/>
</dbReference>
<dbReference type="InterPro" id="IPR002547">
    <property type="entry name" value="tRNA-bd_dom"/>
</dbReference>
<dbReference type="InterPro" id="IPR009080">
    <property type="entry name" value="tRNAsynth_Ia_anticodon-bd"/>
</dbReference>
<dbReference type="NCBIfam" id="TIGR00398">
    <property type="entry name" value="metG"/>
    <property type="match status" value="1"/>
</dbReference>
<dbReference type="NCBIfam" id="TIGR00399">
    <property type="entry name" value="metG_C_term"/>
    <property type="match status" value="1"/>
</dbReference>
<dbReference type="NCBIfam" id="NF001100">
    <property type="entry name" value="PRK00133.1"/>
    <property type="match status" value="1"/>
</dbReference>
<dbReference type="PANTHER" id="PTHR45765">
    <property type="entry name" value="METHIONINE--TRNA LIGASE"/>
    <property type="match status" value="1"/>
</dbReference>
<dbReference type="PANTHER" id="PTHR45765:SF1">
    <property type="entry name" value="METHIONINE--TRNA LIGASE, CYTOPLASMIC"/>
    <property type="match status" value="1"/>
</dbReference>
<dbReference type="Pfam" id="PF09334">
    <property type="entry name" value="tRNA-synt_1g"/>
    <property type="match status" value="1"/>
</dbReference>
<dbReference type="Pfam" id="PF01588">
    <property type="entry name" value="tRNA_bind"/>
    <property type="match status" value="1"/>
</dbReference>
<dbReference type="PRINTS" id="PR01041">
    <property type="entry name" value="TRNASYNTHMET"/>
</dbReference>
<dbReference type="SUPFAM" id="SSF47323">
    <property type="entry name" value="Anticodon-binding domain of a subclass of class I aminoacyl-tRNA synthetases"/>
    <property type="match status" value="1"/>
</dbReference>
<dbReference type="SUPFAM" id="SSF57770">
    <property type="entry name" value="Methionyl-tRNA synthetase (MetRS), Zn-domain"/>
    <property type="match status" value="1"/>
</dbReference>
<dbReference type="SUPFAM" id="SSF50249">
    <property type="entry name" value="Nucleic acid-binding proteins"/>
    <property type="match status" value="1"/>
</dbReference>
<dbReference type="SUPFAM" id="SSF52374">
    <property type="entry name" value="Nucleotidylyl transferase"/>
    <property type="match status" value="1"/>
</dbReference>
<dbReference type="PROSITE" id="PS00178">
    <property type="entry name" value="AA_TRNA_LIGASE_I"/>
    <property type="match status" value="1"/>
</dbReference>
<dbReference type="PROSITE" id="PS50886">
    <property type="entry name" value="TRBD"/>
    <property type="match status" value="1"/>
</dbReference>
<sequence>MRKILVTNALPYANGDLHLGHMLGYIQSDIWVRFQKLQGNQCIFVCGSDTHGTPIMLKAKSLGITPEELVTKYSNRHLQDFTDFEINFDNYHSTHNSLNKEIVEDIYNKLNNKNLISKKAIAQAYDPEAKMFLPDRFVKGTCPKCKAEDQYGDSCEVCGATYDPTELINPRSVISGQSPIQKNSEHFFFDLPALEKNIKDWIESNTLLQPEVANKLAEWFEQGLQSWDISRDAPYFGFAIPGTNEQKFFYVWLDAPMGYIASFKDYCNKNNINFGDFWGDSSSESELYHFIGKDIIYFHALFWPAILSSTGYKTPTSVFANGFLTVNGKKMSKSRGTFIQARTYLDNLEPSYLRYYFASRLTSRIDDIDLNLEEFVTKSNSDIVGKVVNIASRCAGFIYKKFDATLSGEIFDPELESEFSKNHDAITQAFEKREFAHAVRLIMALADKANQFIDYHKPWQLAKEEGQEQKVHQVCSQGINMFKVLIAYLKPIIPSIVAEAERFLNIQFISWADAPKFLINHKIDKFKPLATRIEKEKVDKILEDTKKMFENEQAPQSKKEEPKLDIAAECTFDDFMKVDLRIAKITEASHVEGADKLLKLILDLGGVTKQVFAGIKSAYKPEDLIGKHTIMVANLAPRKMKFGMSEGMVLAAGDGKGIYILEPHEGAQPGMRVK</sequence>
<comment type="function">
    <text evidence="1">Is required not only for elongation of protein synthesis but also for the initiation of all mRNA translation through initiator tRNA(fMet) aminoacylation.</text>
</comment>
<comment type="catalytic activity">
    <reaction evidence="1">
        <text>tRNA(Met) + L-methionine + ATP = L-methionyl-tRNA(Met) + AMP + diphosphate</text>
        <dbReference type="Rhea" id="RHEA:13481"/>
        <dbReference type="Rhea" id="RHEA-COMP:9667"/>
        <dbReference type="Rhea" id="RHEA-COMP:9698"/>
        <dbReference type="ChEBI" id="CHEBI:30616"/>
        <dbReference type="ChEBI" id="CHEBI:33019"/>
        <dbReference type="ChEBI" id="CHEBI:57844"/>
        <dbReference type="ChEBI" id="CHEBI:78442"/>
        <dbReference type="ChEBI" id="CHEBI:78530"/>
        <dbReference type="ChEBI" id="CHEBI:456215"/>
        <dbReference type="EC" id="6.1.1.10"/>
    </reaction>
</comment>
<comment type="cofactor">
    <cofactor evidence="1">
        <name>Zn(2+)</name>
        <dbReference type="ChEBI" id="CHEBI:29105"/>
    </cofactor>
    <text evidence="1">Binds 1 zinc ion per subunit.</text>
</comment>
<comment type="subunit">
    <text evidence="1">Homodimer.</text>
</comment>
<comment type="subcellular location">
    <subcellularLocation>
        <location evidence="1">Cytoplasm</location>
    </subcellularLocation>
</comment>
<comment type="similarity">
    <text evidence="1">Belongs to the class-I aminoacyl-tRNA synthetase family. MetG type 1 subfamily.</text>
</comment>
<accession>A7NAE2</accession>
<gene>
    <name evidence="1" type="primary">metG</name>
    <name type="ordered locus">FTA_0468</name>
</gene>
<protein>
    <recommendedName>
        <fullName evidence="1">Methionine--tRNA ligase</fullName>
        <ecNumber evidence="1">6.1.1.10</ecNumber>
    </recommendedName>
    <alternativeName>
        <fullName evidence="1">Methionyl-tRNA synthetase</fullName>
        <shortName evidence="1">MetRS</shortName>
    </alternativeName>
</protein>
<organism>
    <name type="scientific">Francisella tularensis subsp. holarctica (strain FTNF002-00 / FTA)</name>
    <dbReference type="NCBI Taxonomy" id="458234"/>
    <lineage>
        <taxon>Bacteria</taxon>
        <taxon>Pseudomonadati</taxon>
        <taxon>Pseudomonadota</taxon>
        <taxon>Gammaproteobacteria</taxon>
        <taxon>Thiotrichales</taxon>
        <taxon>Francisellaceae</taxon>
        <taxon>Francisella</taxon>
    </lineage>
</organism>
<feature type="chain" id="PRO_0000331825" description="Methionine--tRNA ligase">
    <location>
        <begin position="1"/>
        <end position="674"/>
    </location>
</feature>
<feature type="domain" description="tRNA-binding" evidence="1">
    <location>
        <begin position="574"/>
        <end position="674"/>
    </location>
</feature>
<feature type="short sequence motif" description="'HIGH' region">
    <location>
        <begin position="11"/>
        <end position="21"/>
    </location>
</feature>
<feature type="short sequence motif" description="'KMSKS' region">
    <location>
        <begin position="330"/>
        <end position="334"/>
    </location>
</feature>
<feature type="binding site" evidence="1">
    <location>
        <position position="142"/>
    </location>
    <ligand>
        <name>Zn(2+)</name>
        <dbReference type="ChEBI" id="CHEBI:29105"/>
    </ligand>
</feature>
<feature type="binding site" evidence="1">
    <location>
        <position position="145"/>
    </location>
    <ligand>
        <name>Zn(2+)</name>
        <dbReference type="ChEBI" id="CHEBI:29105"/>
    </ligand>
</feature>
<feature type="binding site" evidence="1">
    <location>
        <position position="155"/>
    </location>
    <ligand>
        <name>Zn(2+)</name>
        <dbReference type="ChEBI" id="CHEBI:29105"/>
    </ligand>
</feature>
<feature type="binding site" evidence="1">
    <location>
        <position position="158"/>
    </location>
    <ligand>
        <name>Zn(2+)</name>
        <dbReference type="ChEBI" id="CHEBI:29105"/>
    </ligand>
</feature>
<feature type="binding site" evidence="1">
    <location>
        <position position="333"/>
    </location>
    <ligand>
        <name>ATP</name>
        <dbReference type="ChEBI" id="CHEBI:30616"/>
    </ligand>
</feature>
<keyword id="KW-0030">Aminoacyl-tRNA synthetase</keyword>
<keyword id="KW-0067">ATP-binding</keyword>
<keyword id="KW-0963">Cytoplasm</keyword>
<keyword id="KW-0436">Ligase</keyword>
<keyword id="KW-0479">Metal-binding</keyword>
<keyword id="KW-0547">Nucleotide-binding</keyword>
<keyword id="KW-0648">Protein biosynthesis</keyword>
<keyword id="KW-0694">RNA-binding</keyword>
<keyword id="KW-0820">tRNA-binding</keyword>
<keyword id="KW-0862">Zinc</keyword>
<evidence type="ECO:0000255" key="1">
    <source>
        <dbReference type="HAMAP-Rule" id="MF_00098"/>
    </source>
</evidence>
<name>SYM_FRATF</name>
<reference key="1">
    <citation type="journal article" date="2009" name="PLoS ONE">
        <title>Complete genome sequence of Francisella tularensis subspecies holarctica FTNF002-00.</title>
        <authorList>
            <person name="Barabote R.D."/>
            <person name="Xie G."/>
            <person name="Brettin T.S."/>
            <person name="Hinrichs S.H."/>
            <person name="Fey P.D."/>
            <person name="Jay J.J."/>
            <person name="Engle J.L."/>
            <person name="Godbole S.D."/>
            <person name="Noronha J.M."/>
            <person name="Scheuermann R.H."/>
            <person name="Zhou L.W."/>
            <person name="Lion C."/>
            <person name="Dempsey M.P."/>
        </authorList>
    </citation>
    <scope>NUCLEOTIDE SEQUENCE [LARGE SCALE GENOMIC DNA]</scope>
    <source>
        <strain>FTNF002-00 / FTA</strain>
    </source>
</reference>